<protein>
    <recommendedName>
        <fullName evidence="1 4">Ubiquinone biosynthesis protein UbiV</fullName>
    </recommendedName>
</protein>
<comment type="function">
    <text evidence="1 2">Required for O(2)-independent ubiquinone (coenzyme Q) biosynthesis. Together with UbiU, is essential for the C6-hydroxylation reaction in the oxygen-independent ubiquinone biosynthesis pathway.</text>
</comment>
<comment type="cofactor">
    <cofactor evidence="1 2">
        <name>[4Fe-4S] cluster</name>
        <dbReference type="ChEBI" id="CHEBI:49883"/>
    </cofactor>
</comment>
<comment type="pathway">
    <text evidence="1 2">Cofactor biosynthesis; ubiquinone biosynthesis.</text>
</comment>
<comment type="subunit">
    <text evidence="1 2">Forms a heterodimer with UbiU.</text>
</comment>
<comment type="disruption phenotype">
    <text evidence="2">Deletion mutant is unable to synthesize ubiquinone under strict anaerobic conditions. Mutant shows normal levels of ubiquinone after aerobic growth.</text>
</comment>
<comment type="similarity">
    <text evidence="1 4">Belongs to the peptidase U32 family. UbiV subfamily.</text>
</comment>
<comment type="sequence caution" evidence="4">
    <conflict type="erroneous initiation">
        <sequence resource="EMBL-CDS" id="AAA57962"/>
    </conflict>
</comment>
<organism>
    <name type="scientific">Escherichia coli (strain K12)</name>
    <dbReference type="NCBI Taxonomy" id="83333"/>
    <lineage>
        <taxon>Bacteria</taxon>
        <taxon>Pseudomonadati</taxon>
        <taxon>Pseudomonadota</taxon>
        <taxon>Gammaproteobacteria</taxon>
        <taxon>Enterobacterales</taxon>
        <taxon>Enterobacteriaceae</taxon>
        <taxon>Escherichia</taxon>
    </lineage>
</organism>
<evidence type="ECO:0000255" key="1">
    <source>
        <dbReference type="HAMAP-Rule" id="MF_02233"/>
    </source>
</evidence>
<evidence type="ECO:0000269" key="2">
    <source>
    </source>
</evidence>
<evidence type="ECO:0000303" key="3">
    <source>
    </source>
</evidence>
<evidence type="ECO:0000305" key="4"/>
<keyword id="KW-0004">4Fe-4S</keyword>
<keyword id="KW-0408">Iron</keyword>
<keyword id="KW-0411">Iron-sulfur</keyword>
<keyword id="KW-0479">Metal-binding</keyword>
<keyword id="KW-1185">Reference proteome</keyword>
<keyword id="KW-0831">Ubiquinone biosynthesis</keyword>
<reference key="1">
    <citation type="journal article" date="1997" name="Science">
        <title>The complete genome sequence of Escherichia coli K-12.</title>
        <authorList>
            <person name="Blattner F.R."/>
            <person name="Plunkett G. III"/>
            <person name="Bloch C.A."/>
            <person name="Perna N.T."/>
            <person name="Burland V."/>
            <person name="Riley M."/>
            <person name="Collado-Vides J."/>
            <person name="Glasner J.D."/>
            <person name="Rode C.K."/>
            <person name="Mayhew G.F."/>
            <person name="Gregor J."/>
            <person name="Davis N.W."/>
            <person name="Kirkpatrick H.A."/>
            <person name="Goeden M.A."/>
            <person name="Rose D.J."/>
            <person name="Mau B."/>
            <person name="Shao Y."/>
        </authorList>
    </citation>
    <scope>NUCLEOTIDE SEQUENCE [LARGE SCALE GENOMIC DNA]</scope>
    <source>
        <strain>K12 / MG1655 / ATCC 47076</strain>
    </source>
</reference>
<reference key="2">
    <citation type="journal article" date="2006" name="Mol. Syst. Biol.">
        <title>Highly accurate genome sequences of Escherichia coli K-12 strains MG1655 and W3110.</title>
        <authorList>
            <person name="Hayashi K."/>
            <person name="Morooka N."/>
            <person name="Yamamoto Y."/>
            <person name="Fujita K."/>
            <person name="Isono K."/>
            <person name="Choi S."/>
            <person name="Ohtsubo E."/>
            <person name="Baba T."/>
            <person name="Wanner B.L."/>
            <person name="Mori H."/>
            <person name="Horiuchi T."/>
        </authorList>
    </citation>
    <scope>NUCLEOTIDE SEQUENCE [LARGE SCALE GENOMIC DNA]</scope>
    <source>
        <strain>K12 / W3110 / ATCC 27325 / DSM 5911</strain>
    </source>
</reference>
<reference key="3">
    <citation type="journal article" date="2019" name="MBio">
        <title>Ubiquinone biosynthesis over the entire O2 range: characterization of a conserved O2-independent pathway.</title>
        <authorList>
            <person name="Pelosi L."/>
            <person name="Vo C.D."/>
            <person name="Abby S.S."/>
            <person name="Loiseau L."/>
            <person name="Rascalou B."/>
            <person name="Hajj Chehade M."/>
            <person name="Faivre B."/>
            <person name="Gousse M."/>
            <person name="Chenal C."/>
            <person name="Touati N."/>
            <person name="Binet L."/>
            <person name="Cornu D."/>
            <person name="Fyfe C.D."/>
            <person name="Fontecave M."/>
            <person name="Barras F."/>
            <person name="Lombard M."/>
            <person name="Pierrel F."/>
        </authorList>
    </citation>
    <scope>FUNCTION</scope>
    <scope>COFACTOR</scope>
    <scope>PATHWAY</scope>
    <scope>SUBUNIT</scope>
    <scope>DISRUPTION PHENOTYPE</scope>
    <scope>MUTAGENESIS OF CYS-39; CYS-180; CYS-193 AND CYS-197</scope>
    <source>
        <strain>K12 / MG1655 / ATCC 47076</strain>
    </source>
</reference>
<sequence>MKYSLGPVLWYWPKETLEEFYQQAATSSADVIYLGEAVCSKRRATKVGDWLEMAKSLAGSGKQIVLSTLALVQASSELGELKRYVENGEFLIEASDLGVVNMCAERKLPFVAGHALNCYNAVTLKILLKQGMMRWCMPVELSRDWLVNLLNQCDELGIRNQFEVEVLSYGHLPLAYSARCFTARSEDRPKDECETCCIKYPNGRNVLSQENQQVFVLNGIQTMSGYVYNLGNELASMQGLVDVVRLSPQGTDTFAMLDAFRANENGAAPLPLTANSDCNGYWRRLAGLELQA</sequence>
<name>UBIV_ECOLI</name>
<proteinExistence type="evidence at protein level"/>
<feature type="chain" id="PRO_0000169459" description="Ubiquinone biosynthesis protein UbiV">
    <location>
        <begin position="1"/>
        <end position="292"/>
    </location>
</feature>
<feature type="binding site" evidence="1 2">
    <location>
        <position position="39"/>
    </location>
    <ligand>
        <name>[4Fe-4S] cluster</name>
        <dbReference type="ChEBI" id="CHEBI:49883"/>
    </ligand>
</feature>
<feature type="binding site" evidence="1 2">
    <location>
        <position position="180"/>
    </location>
    <ligand>
        <name>[4Fe-4S] cluster</name>
        <dbReference type="ChEBI" id="CHEBI:49883"/>
    </ligand>
</feature>
<feature type="binding site" evidence="1 2">
    <location>
        <position position="193"/>
    </location>
    <ligand>
        <name>[4Fe-4S] cluster</name>
        <dbReference type="ChEBI" id="CHEBI:49883"/>
    </ligand>
</feature>
<feature type="binding site" evidence="1 2">
    <location>
        <position position="197"/>
    </location>
    <ligand>
        <name>[4Fe-4S] cluster</name>
        <dbReference type="ChEBI" id="CHEBI:49883"/>
    </ligand>
</feature>
<feature type="mutagenesis site" description="Does not bind iron-sulfur cluster; when associated with A-180; A-193 and A-197." evidence="2">
    <original>C</original>
    <variation>A</variation>
    <location>
        <position position="39"/>
    </location>
</feature>
<feature type="mutagenesis site" description="Alters ubiquinone synthesis in anaerobic conditions. Does not bind iron-sulfur cluster; when associated with A-39; A-193 and A-197." evidence="2">
    <original>C</original>
    <variation>A</variation>
    <location>
        <position position="180"/>
    </location>
</feature>
<feature type="mutagenesis site" description="Alters ubiquinone synthesis in anaerobic conditions. Does not bind iron-sulfur cluster; when associated with A-39; A-180 and A-197." evidence="2">
    <original>C</original>
    <variation>A</variation>
    <location>
        <position position="193"/>
    </location>
</feature>
<feature type="mutagenesis site" description="Does not bind iron-sulfur cluster; when associated with A-39; A-180 and A-193." evidence="2">
    <original>C</original>
    <variation>A</variation>
    <location>
        <position position="197"/>
    </location>
</feature>
<gene>
    <name evidence="1 3" type="primary">ubiV</name>
    <name type="synonym">yhbV</name>
    <name type="ordered locus">b3159</name>
    <name type="ordered locus">JW5530</name>
</gene>
<accession>P45475</accession>
<accession>Q2M951</accession>
<dbReference type="EMBL" id="U18997">
    <property type="protein sequence ID" value="AAA57962.1"/>
    <property type="status" value="ALT_INIT"/>
    <property type="molecule type" value="Genomic_DNA"/>
</dbReference>
<dbReference type="EMBL" id="U00096">
    <property type="protein sequence ID" value="AAC76193.2"/>
    <property type="molecule type" value="Genomic_DNA"/>
</dbReference>
<dbReference type="EMBL" id="AP009048">
    <property type="protein sequence ID" value="BAE77205.1"/>
    <property type="molecule type" value="Genomic_DNA"/>
</dbReference>
<dbReference type="PIR" id="C65106">
    <property type="entry name" value="C65106"/>
</dbReference>
<dbReference type="RefSeq" id="NP_417628.2">
    <property type="nucleotide sequence ID" value="NC_000913.3"/>
</dbReference>
<dbReference type="RefSeq" id="WP_001301318.1">
    <property type="nucleotide sequence ID" value="NZ_STEB01000012.1"/>
</dbReference>
<dbReference type="BioGRID" id="4259276">
    <property type="interactions" value="56"/>
</dbReference>
<dbReference type="DIP" id="DIP-12269N"/>
<dbReference type="FunCoup" id="P45475">
    <property type="interactions" value="144"/>
</dbReference>
<dbReference type="IntAct" id="P45475">
    <property type="interactions" value="1"/>
</dbReference>
<dbReference type="STRING" id="511145.b3159"/>
<dbReference type="MEROPS" id="U32.A01"/>
<dbReference type="jPOST" id="P45475"/>
<dbReference type="PaxDb" id="511145-b3159"/>
<dbReference type="EnsemblBacteria" id="AAC76193">
    <property type="protein sequence ID" value="AAC76193"/>
    <property type="gene ID" value="b3159"/>
</dbReference>
<dbReference type="GeneID" id="949117"/>
<dbReference type="KEGG" id="ecj:JW5530"/>
<dbReference type="KEGG" id="eco:b3159"/>
<dbReference type="KEGG" id="ecoc:C3026_17205"/>
<dbReference type="PATRIC" id="fig|1411691.4.peg.3571"/>
<dbReference type="EchoBASE" id="EB2643"/>
<dbReference type="eggNOG" id="COG0826">
    <property type="taxonomic scope" value="Bacteria"/>
</dbReference>
<dbReference type="HOGENOM" id="CLU_056172_0_0_6"/>
<dbReference type="InParanoid" id="P45475"/>
<dbReference type="OMA" id="CCIKYPT"/>
<dbReference type="OrthoDB" id="8523349at2"/>
<dbReference type="PhylomeDB" id="P45475"/>
<dbReference type="BioCyc" id="EcoCyc:G7653-MONOMER"/>
<dbReference type="UniPathway" id="UPA00232"/>
<dbReference type="PRO" id="PR:P45475"/>
<dbReference type="Proteomes" id="UP000000625">
    <property type="component" value="Chromosome"/>
</dbReference>
<dbReference type="GO" id="GO:0051539">
    <property type="term" value="F:4 iron, 4 sulfur cluster binding"/>
    <property type="evidence" value="ECO:0000314"/>
    <property type="project" value="EcoCyc"/>
</dbReference>
<dbReference type="GO" id="GO:0046872">
    <property type="term" value="F:metal ion binding"/>
    <property type="evidence" value="ECO:0007669"/>
    <property type="project" value="UniProtKB-KW"/>
</dbReference>
<dbReference type="GO" id="GO:0006744">
    <property type="term" value="P:ubiquinone biosynthetic process"/>
    <property type="evidence" value="ECO:0007669"/>
    <property type="project" value="UniProtKB-UniRule"/>
</dbReference>
<dbReference type="HAMAP" id="MF_02233">
    <property type="entry name" value="UbiV"/>
    <property type="match status" value="1"/>
</dbReference>
<dbReference type="InterPro" id="IPR001539">
    <property type="entry name" value="Peptidase_U32"/>
</dbReference>
<dbReference type="InterPro" id="IPR051454">
    <property type="entry name" value="RNA/ubiquinone_mod_enzymes"/>
</dbReference>
<dbReference type="InterPro" id="IPR043693">
    <property type="entry name" value="UbiV"/>
</dbReference>
<dbReference type="NCBIfam" id="NF011991">
    <property type="entry name" value="PRK15447.1"/>
    <property type="match status" value="1"/>
</dbReference>
<dbReference type="PANTHER" id="PTHR30217">
    <property type="entry name" value="PEPTIDASE U32 FAMILY"/>
    <property type="match status" value="1"/>
</dbReference>
<dbReference type="PANTHER" id="PTHR30217:SF11">
    <property type="entry name" value="UBIQUINONE BIOSYNTHESIS PROTEIN UBIV"/>
    <property type="match status" value="1"/>
</dbReference>
<dbReference type="Pfam" id="PF01136">
    <property type="entry name" value="Peptidase_U32"/>
    <property type="match status" value="1"/>
</dbReference>